<comment type="function">
    <text evidence="1">Catalyzes the conversion of N-acetyl-diaminopimelate to diaminopimelate and acetate.</text>
</comment>
<comment type="catalytic activity">
    <reaction evidence="1">
        <text>N-acetyl-(2S,6S)-2,6-diaminopimelate + H2O = (2S,6S)-2,6-diaminopimelate + acetate</text>
        <dbReference type="Rhea" id="RHEA:20405"/>
        <dbReference type="ChEBI" id="CHEBI:15377"/>
        <dbReference type="ChEBI" id="CHEBI:30089"/>
        <dbReference type="ChEBI" id="CHEBI:57609"/>
        <dbReference type="ChEBI" id="CHEBI:58767"/>
        <dbReference type="EC" id="3.5.1.47"/>
    </reaction>
</comment>
<comment type="pathway">
    <text evidence="1">Amino-acid biosynthesis; L-lysine biosynthesis via DAP pathway; LL-2,6-diaminopimelate from (S)-tetrahydrodipicolinate (acetylase route): step 3/3.</text>
</comment>
<comment type="similarity">
    <text evidence="1">Belongs to the peptidase M20A family. N-acetyldiaminopimelate deacetylase subfamily.</text>
</comment>
<dbReference type="EC" id="3.5.1.47" evidence="1"/>
<dbReference type="EMBL" id="CP000813">
    <property type="protein sequence ID" value="ABV61999.1"/>
    <property type="molecule type" value="Genomic_DNA"/>
</dbReference>
<dbReference type="SMR" id="A8FCN2"/>
<dbReference type="STRING" id="315750.BPUM_1316"/>
<dbReference type="MEROPS" id="M20.A27"/>
<dbReference type="KEGG" id="bpu:BPUM_1316"/>
<dbReference type="eggNOG" id="COG1473">
    <property type="taxonomic scope" value="Bacteria"/>
</dbReference>
<dbReference type="HOGENOM" id="CLU_023257_0_1_9"/>
<dbReference type="OrthoDB" id="9776731at2"/>
<dbReference type="UniPathway" id="UPA00034">
    <property type="reaction ID" value="UER00024"/>
</dbReference>
<dbReference type="Proteomes" id="UP000001355">
    <property type="component" value="Chromosome"/>
</dbReference>
<dbReference type="GO" id="GO:0050118">
    <property type="term" value="F:N-acetyldiaminopimelate deacetylase activity"/>
    <property type="evidence" value="ECO:0007669"/>
    <property type="project" value="UniProtKB-UniRule"/>
</dbReference>
<dbReference type="GO" id="GO:0019877">
    <property type="term" value="P:diaminopimelate biosynthetic process"/>
    <property type="evidence" value="ECO:0007669"/>
    <property type="project" value="UniProtKB-UniRule"/>
</dbReference>
<dbReference type="GO" id="GO:0009089">
    <property type="term" value="P:lysine biosynthetic process via diaminopimelate"/>
    <property type="evidence" value="ECO:0007669"/>
    <property type="project" value="UniProtKB-UniRule"/>
</dbReference>
<dbReference type="CDD" id="cd05670">
    <property type="entry name" value="M20_Acy1_YkuR-like"/>
    <property type="match status" value="1"/>
</dbReference>
<dbReference type="FunFam" id="3.30.70.360:FF:000001">
    <property type="entry name" value="N-acetyldiaminopimelate deacetylase"/>
    <property type="match status" value="1"/>
</dbReference>
<dbReference type="Gene3D" id="3.30.70.360">
    <property type="match status" value="1"/>
</dbReference>
<dbReference type="Gene3D" id="3.40.630.10">
    <property type="entry name" value="Zn peptidases"/>
    <property type="match status" value="1"/>
</dbReference>
<dbReference type="HAMAP" id="MF_01692">
    <property type="entry name" value="DapEL"/>
    <property type="match status" value="1"/>
</dbReference>
<dbReference type="InterPro" id="IPR023905">
    <property type="entry name" value="AcetylDAP_deacetylase"/>
</dbReference>
<dbReference type="InterPro" id="IPR017439">
    <property type="entry name" value="Amidohydrolase"/>
</dbReference>
<dbReference type="InterPro" id="IPR036264">
    <property type="entry name" value="Bact_exopeptidase_dim_dom"/>
</dbReference>
<dbReference type="InterPro" id="IPR002933">
    <property type="entry name" value="Peptidase_M20"/>
</dbReference>
<dbReference type="InterPro" id="IPR011650">
    <property type="entry name" value="Peptidase_M20_dimer"/>
</dbReference>
<dbReference type="NCBIfam" id="TIGR01891">
    <property type="entry name" value="amidohydrolases"/>
    <property type="match status" value="1"/>
</dbReference>
<dbReference type="PANTHER" id="PTHR11014:SF98">
    <property type="entry name" value="N-ACETYLDIAMINOPIMELATE DEACETYLASE"/>
    <property type="match status" value="1"/>
</dbReference>
<dbReference type="PANTHER" id="PTHR11014">
    <property type="entry name" value="PEPTIDASE M20 FAMILY MEMBER"/>
    <property type="match status" value="1"/>
</dbReference>
<dbReference type="Pfam" id="PF07687">
    <property type="entry name" value="M20_dimer"/>
    <property type="match status" value="1"/>
</dbReference>
<dbReference type="Pfam" id="PF01546">
    <property type="entry name" value="Peptidase_M20"/>
    <property type="match status" value="1"/>
</dbReference>
<dbReference type="PIRSF" id="PIRSF005962">
    <property type="entry name" value="Pept_M20D_amidohydro"/>
    <property type="match status" value="1"/>
</dbReference>
<dbReference type="SUPFAM" id="SSF55031">
    <property type="entry name" value="Bacterial exopeptidase dimerisation domain"/>
    <property type="match status" value="1"/>
</dbReference>
<dbReference type="SUPFAM" id="SSF53187">
    <property type="entry name" value="Zn-dependent exopeptidases"/>
    <property type="match status" value="1"/>
</dbReference>
<accession>A8FCN2</accession>
<proteinExistence type="inferred from homology"/>
<feature type="chain" id="PRO_0000376749" description="N-acetyldiaminopimelate deacetylase">
    <location>
        <begin position="1"/>
        <end position="376"/>
    </location>
</feature>
<feature type="active site" evidence="1">
    <location>
        <position position="70"/>
    </location>
</feature>
<feature type="active site" description="Proton acceptor" evidence="1">
    <location>
        <position position="129"/>
    </location>
</feature>
<organism>
    <name type="scientific">Bacillus pumilus (strain SAFR-032)</name>
    <dbReference type="NCBI Taxonomy" id="315750"/>
    <lineage>
        <taxon>Bacteria</taxon>
        <taxon>Bacillati</taxon>
        <taxon>Bacillota</taxon>
        <taxon>Bacilli</taxon>
        <taxon>Bacillales</taxon>
        <taxon>Bacillaceae</taxon>
        <taxon>Bacillus</taxon>
    </lineage>
</organism>
<gene>
    <name type="ordered locus">BPUM_1316</name>
</gene>
<name>DAPEL_BACP2</name>
<protein>
    <recommendedName>
        <fullName evidence="1">N-acetyldiaminopimelate deacetylase</fullName>
        <ecNumber evidence="1">3.5.1.47</ecNumber>
    </recommendedName>
</protein>
<evidence type="ECO:0000255" key="1">
    <source>
        <dbReference type="HAMAP-Rule" id="MF_01692"/>
    </source>
</evidence>
<sequence length="376" mass="41849">MLNREQLISIRRDLHQIPELGFKEFKTQAYLINHLDAYSKDRIEMETWRTGLFVKVKGTNPERVFAYRADMDGLSIPEDTGYPFQSVHEGKMHACGHDLHMTIALGVIDHFVHEPIKEDLLFMFQPAEEGPGGAEPMLTSDVLKKWTPDFITALHIAPEYPVGTIATKPGLLFANTSELVIDLEGKGGHAAYPHLANDMVVAASALVGQLQSVISRNVDPLDSAVITIGTITGGTAQNIIAQHAKLDGTIRTLSPESMEKVRKRIEALAKGIEIGYECKATVRYPSSYYEVDNSKELTEEFMSYVAEEGLANVVECREAMTGEDFGYMLKKYPGFMFWLGVDSEYGLHHAKLMPDEKAIETAVNVMTAYFKKQAGE</sequence>
<keyword id="KW-0028">Amino-acid biosynthesis</keyword>
<keyword id="KW-0220">Diaminopimelate biosynthesis</keyword>
<keyword id="KW-0378">Hydrolase</keyword>
<keyword id="KW-0457">Lysine biosynthesis</keyword>
<reference key="1">
    <citation type="journal article" date="2007" name="PLoS ONE">
        <title>Paradoxical DNA repair and peroxide resistance gene conservation in Bacillus pumilus SAFR-032.</title>
        <authorList>
            <person name="Gioia J."/>
            <person name="Yerrapragada S."/>
            <person name="Qin X."/>
            <person name="Jiang H."/>
            <person name="Igboeli O.C."/>
            <person name="Muzny D."/>
            <person name="Dugan-Rocha S."/>
            <person name="Ding Y."/>
            <person name="Hawes A."/>
            <person name="Liu W."/>
            <person name="Perez L."/>
            <person name="Kovar C."/>
            <person name="Dinh H."/>
            <person name="Lee S."/>
            <person name="Nazareth L."/>
            <person name="Blyth P."/>
            <person name="Holder M."/>
            <person name="Buhay C."/>
            <person name="Tirumalai M.R."/>
            <person name="Liu Y."/>
            <person name="Dasgupta I."/>
            <person name="Bokhetache L."/>
            <person name="Fujita M."/>
            <person name="Karouia F."/>
            <person name="Eswara Moorthy P."/>
            <person name="Siefert J."/>
            <person name="Uzman A."/>
            <person name="Buzumbo P."/>
            <person name="Verma A."/>
            <person name="Zwiya H."/>
            <person name="McWilliams B.D."/>
            <person name="Olowu A."/>
            <person name="Clinkenbeard K.D."/>
            <person name="Newcombe D."/>
            <person name="Golebiewski L."/>
            <person name="Petrosino J.F."/>
            <person name="Nicholson W.L."/>
            <person name="Fox G.E."/>
            <person name="Venkateswaran K."/>
            <person name="Highlander S.K."/>
            <person name="Weinstock G.M."/>
        </authorList>
    </citation>
    <scope>NUCLEOTIDE SEQUENCE [LARGE SCALE GENOMIC DNA]</scope>
    <source>
        <strain>SAFR-032</strain>
    </source>
</reference>